<sequence>MPQIQSSHSNHFDFTIDTADRTKLLMSYLVVPTTANFNNVMHGGELLNLLDKVAYVCSTRYCAKGTVTLSVDGVTFKYPIPVGNLLTFLASINYVGNTSCEVGIKVLSEDIKTREITHTNSCYFTMVAVENGKPTPMPKYEPKTEVEIRRYEGALKRKEMRTRGYLKSGKHEGV</sequence>
<evidence type="ECO:0000255" key="1">
    <source>
        <dbReference type="PROSITE-ProRule" id="PRU01106"/>
    </source>
</evidence>
<evidence type="ECO:0000305" key="2"/>
<comment type="similarity">
    <text evidence="2">Belongs to the acyl coenzyme A hydrolase family.</text>
</comment>
<keyword id="KW-0378">Hydrolase</keyword>
<accession>P0A0Q8</accession>
<accession>O05729</accession>
<protein>
    <recommendedName>
        <fullName>Protein VdlD</fullName>
    </recommendedName>
</protein>
<name>VDLD_HELPJ</name>
<gene>
    <name type="primary">vdlD</name>
    <name type="ordered locus">jhp_0824</name>
</gene>
<dbReference type="EMBL" id="AE001439">
    <property type="protein sequence ID" value="AAD06410.1"/>
    <property type="molecule type" value="Genomic_DNA"/>
</dbReference>
<dbReference type="PIR" id="C64631">
    <property type="entry name" value="C64631"/>
</dbReference>
<dbReference type="RefSeq" id="WP_001135603.1">
    <property type="nucleotide sequence ID" value="NZ_CP011330.1"/>
</dbReference>
<dbReference type="SMR" id="P0A0Q8"/>
<dbReference type="KEGG" id="hpj:jhp_0824"/>
<dbReference type="PATRIC" id="fig|85963.30.peg.147"/>
<dbReference type="eggNOG" id="COG1607">
    <property type="taxonomic scope" value="Bacteria"/>
</dbReference>
<dbReference type="Proteomes" id="UP000000804">
    <property type="component" value="Chromosome"/>
</dbReference>
<dbReference type="GO" id="GO:0005829">
    <property type="term" value="C:cytosol"/>
    <property type="evidence" value="ECO:0007669"/>
    <property type="project" value="TreeGrafter"/>
</dbReference>
<dbReference type="GO" id="GO:0052816">
    <property type="term" value="F:long-chain fatty acyl-CoA hydrolase activity"/>
    <property type="evidence" value="ECO:0007669"/>
    <property type="project" value="TreeGrafter"/>
</dbReference>
<dbReference type="GO" id="GO:0006637">
    <property type="term" value="P:acyl-CoA metabolic process"/>
    <property type="evidence" value="ECO:0007669"/>
    <property type="project" value="TreeGrafter"/>
</dbReference>
<dbReference type="CDD" id="cd03442">
    <property type="entry name" value="BFIT_BACH"/>
    <property type="match status" value="1"/>
</dbReference>
<dbReference type="FunFam" id="3.10.129.10:FF:000035">
    <property type="entry name" value="Thioesterase superfamily protein"/>
    <property type="match status" value="1"/>
</dbReference>
<dbReference type="Gene3D" id="3.10.129.10">
    <property type="entry name" value="Hotdog Thioesterase"/>
    <property type="match status" value="1"/>
</dbReference>
<dbReference type="InterPro" id="IPR040170">
    <property type="entry name" value="Cytosol_ACT"/>
</dbReference>
<dbReference type="InterPro" id="IPR033120">
    <property type="entry name" value="HOTDOG_ACOT"/>
</dbReference>
<dbReference type="InterPro" id="IPR029069">
    <property type="entry name" value="HotDog_dom_sf"/>
</dbReference>
<dbReference type="InterPro" id="IPR006683">
    <property type="entry name" value="Thioestr_dom"/>
</dbReference>
<dbReference type="PANTHER" id="PTHR11049">
    <property type="entry name" value="ACYL COENZYME A THIOESTER HYDROLASE"/>
    <property type="match status" value="1"/>
</dbReference>
<dbReference type="PANTHER" id="PTHR11049:SF16">
    <property type="entry name" value="PROTEIN VDLD"/>
    <property type="match status" value="1"/>
</dbReference>
<dbReference type="Pfam" id="PF03061">
    <property type="entry name" value="4HBT"/>
    <property type="match status" value="1"/>
</dbReference>
<dbReference type="SUPFAM" id="SSF54637">
    <property type="entry name" value="Thioesterase/thiol ester dehydrase-isomerase"/>
    <property type="match status" value="1"/>
</dbReference>
<dbReference type="PROSITE" id="PS51770">
    <property type="entry name" value="HOTDOG_ACOT"/>
    <property type="match status" value="1"/>
</dbReference>
<reference key="1">
    <citation type="journal article" date="1999" name="Nature">
        <title>Genomic sequence comparison of two unrelated isolates of the human gastric pathogen Helicobacter pylori.</title>
        <authorList>
            <person name="Alm R.A."/>
            <person name="Ling L.-S.L."/>
            <person name="Moir D.T."/>
            <person name="King B.L."/>
            <person name="Brown E.D."/>
            <person name="Doig P.C."/>
            <person name="Smith D.R."/>
            <person name="Noonan B."/>
            <person name="Guild B.C."/>
            <person name="deJonge B.L."/>
            <person name="Carmel G."/>
            <person name="Tummino P.J."/>
            <person name="Caruso A."/>
            <person name="Uria-Nickelsen M."/>
            <person name="Mills D.M."/>
            <person name="Ives C."/>
            <person name="Gibson R."/>
            <person name="Merberg D."/>
            <person name="Mills S.D."/>
            <person name="Jiang Q."/>
            <person name="Taylor D.E."/>
            <person name="Vovis G.F."/>
            <person name="Trust T.J."/>
        </authorList>
    </citation>
    <scope>NUCLEOTIDE SEQUENCE [LARGE SCALE GENOMIC DNA]</scope>
    <source>
        <strain>J99 / ATCC 700824</strain>
    </source>
</reference>
<feature type="chain" id="PRO_0000053816" description="Protein VdlD">
    <location>
        <begin position="1"/>
        <end position="174"/>
    </location>
</feature>
<feature type="domain" description="HotDog ACOT-type" evidence="1">
    <location>
        <begin position="20"/>
        <end position="132"/>
    </location>
</feature>
<proteinExistence type="inferred from homology"/>
<organism>
    <name type="scientific">Helicobacter pylori (strain J99 / ATCC 700824)</name>
    <name type="common">Campylobacter pylori J99</name>
    <dbReference type="NCBI Taxonomy" id="85963"/>
    <lineage>
        <taxon>Bacteria</taxon>
        <taxon>Pseudomonadati</taxon>
        <taxon>Campylobacterota</taxon>
        <taxon>Epsilonproteobacteria</taxon>
        <taxon>Campylobacterales</taxon>
        <taxon>Helicobacteraceae</taxon>
        <taxon>Helicobacter</taxon>
    </lineage>
</organism>